<dbReference type="EMBL" id="U40930">
    <property type="protein sequence ID" value="AAB17127.1"/>
    <property type="molecule type" value="mRNA"/>
</dbReference>
<dbReference type="EMBL" id="U57413">
    <property type="protein sequence ID" value="AAB02908.1"/>
    <property type="molecule type" value="mRNA"/>
</dbReference>
<dbReference type="EMBL" id="AK028898">
    <property type="protein sequence ID" value="BAC26183.1"/>
    <property type="molecule type" value="mRNA"/>
</dbReference>
<dbReference type="EMBL" id="AL627187">
    <property type="status" value="NOT_ANNOTATED_CDS"/>
    <property type="molecule type" value="Genomic_DNA"/>
</dbReference>
<dbReference type="EMBL" id="BC006019">
    <property type="protein sequence ID" value="AAH06019.1"/>
    <property type="molecule type" value="mRNA"/>
</dbReference>
<dbReference type="CCDS" id="CCDS24629.1">
    <molecule id="Q64337-1"/>
</dbReference>
<dbReference type="CCDS" id="CCDS70176.1">
    <molecule id="Q64337-2"/>
</dbReference>
<dbReference type="PIR" id="JC4978">
    <property type="entry name" value="JC4978"/>
</dbReference>
<dbReference type="RefSeq" id="NP_001277698.1">
    <molecule id="Q64337-2"/>
    <property type="nucleotide sequence ID" value="NM_001290769.1"/>
</dbReference>
<dbReference type="RefSeq" id="NP_035148.1">
    <molecule id="Q64337-1"/>
    <property type="nucleotide sequence ID" value="NM_011018.3"/>
</dbReference>
<dbReference type="PDB" id="2RRU">
    <property type="method" value="NMR"/>
    <property type="chains" value="A=391-438"/>
</dbReference>
<dbReference type="PDB" id="2ZJD">
    <property type="method" value="X-ray"/>
    <property type="resolution" value="1.56 A"/>
    <property type="chains" value="B/D=334-344"/>
</dbReference>
<dbReference type="PDB" id="3ADE">
    <property type="method" value="X-ray"/>
    <property type="resolution" value="2.80 A"/>
    <property type="chains" value="B=346-359"/>
</dbReference>
<dbReference type="PDB" id="3B0F">
    <property type="method" value="X-ray"/>
    <property type="resolution" value="1.40 A"/>
    <property type="chains" value="A/B=391-438"/>
</dbReference>
<dbReference type="PDB" id="3WDZ">
    <property type="method" value="X-ray"/>
    <property type="resolution" value="2.60 A"/>
    <property type="chains" value="B=346-359"/>
</dbReference>
<dbReference type="PDBsum" id="2RRU"/>
<dbReference type="PDBsum" id="2ZJD"/>
<dbReference type="PDBsum" id="3ADE"/>
<dbReference type="PDBsum" id="3B0F"/>
<dbReference type="PDBsum" id="3WDZ"/>
<dbReference type="BMRB" id="Q64337"/>
<dbReference type="SMR" id="Q64337"/>
<dbReference type="BioGRID" id="201982">
    <property type="interactions" value="107"/>
</dbReference>
<dbReference type="CORUM" id="Q64337"/>
<dbReference type="DIP" id="DIP-38490N"/>
<dbReference type="ELM" id="Q64337"/>
<dbReference type="FunCoup" id="Q64337">
    <property type="interactions" value="1216"/>
</dbReference>
<dbReference type="IntAct" id="Q64337">
    <property type="interactions" value="27"/>
</dbReference>
<dbReference type="MINT" id="Q64337"/>
<dbReference type="STRING" id="10090.ENSMUSP00000099835"/>
<dbReference type="ChEMBL" id="CHEMBL4879477"/>
<dbReference type="GlyGen" id="Q64337">
    <property type="glycosylation" value="2 sites, 1 N-linked glycan (1 site), 1 O-linked glycan (1 site)"/>
</dbReference>
<dbReference type="iPTMnet" id="Q64337"/>
<dbReference type="PhosphoSitePlus" id="Q64337"/>
<dbReference type="SwissPalm" id="Q64337"/>
<dbReference type="jPOST" id="Q64337"/>
<dbReference type="PaxDb" id="10090-ENSMUSP00000099835"/>
<dbReference type="PeptideAtlas" id="Q64337"/>
<dbReference type="ProteomicsDB" id="261649">
    <molecule id="Q64337-1"/>
</dbReference>
<dbReference type="ProteomicsDB" id="261650">
    <molecule id="Q64337-2"/>
</dbReference>
<dbReference type="Pumba" id="Q64337"/>
<dbReference type="Antibodypedia" id="761">
    <property type="antibodies" value="1359 antibodies from 48 providers"/>
</dbReference>
<dbReference type="DNASU" id="18412"/>
<dbReference type="Ensembl" id="ENSMUST00000015981.12">
    <molecule id="Q64337-2"/>
    <property type="protein sequence ID" value="ENSMUSP00000015981.6"/>
    <property type="gene ID" value="ENSMUSG00000015837.16"/>
</dbReference>
<dbReference type="Ensembl" id="ENSMUST00000102774.11">
    <molecule id="Q64337-1"/>
    <property type="protein sequence ID" value="ENSMUSP00000099835.5"/>
    <property type="gene ID" value="ENSMUSG00000015837.16"/>
</dbReference>
<dbReference type="GeneID" id="18412"/>
<dbReference type="KEGG" id="mmu:18412"/>
<dbReference type="UCSC" id="uc007irw.2">
    <molecule id="Q64337-1"/>
    <property type="organism name" value="mouse"/>
</dbReference>
<dbReference type="UCSC" id="uc007irx.2">
    <molecule id="Q64337-2"/>
    <property type="organism name" value="mouse"/>
</dbReference>
<dbReference type="AGR" id="MGI:107931"/>
<dbReference type="CTD" id="8878"/>
<dbReference type="MGI" id="MGI:107931">
    <property type="gene designation" value="Sqstm1"/>
</dbReference>
<dbReference type="VEuPathDB" id="HostDB:ENSMUSG00000015837"/>
<dbReference type="eggNOG" id="KOG4582">
    <property type="taxonomic scope" value="Eukaryota"/>
</dbReference>
<dbReference type="GeneTree" id="ENSGT00390000002781"/>
<dbReference type="HOGENOM" id="CLU_038011_1_0_1"/>
<dbReference type="InParanoid" id="Q64337"/>
<dbReference type="OMA" id="NCNGWLT"/>
<dbReference type="OrthoDB" id="441278at2759"/>
<dbReference type="PhylomeDB" id="Q64337"/>
<dbReference type="TreeFam" id="TF328470"/>
<dbReference type="Reactome" id="R-MMU-205043">
    <property type="pathway name" value="NRIF signals cell death from the nucleus"/>
</dbReference>
<dbReference type="Reactome" id="R-MMU-209543">
    <property type="pathway name" value="p75NTR recruits signalling complexes"/>
</dbReference>
<dbReference type="Reactome" id="R-MMU-209560">
    <property type="pathway name" value="NF-kB is activated and signals survival"/>
</dbReference>
<dbReference type="Reactome" id="R-MMU-5205685">
    <property type="pathway name" value="PINK1-PRKN Mediated Mitophagy"/>
</dbReference>
<dbReference type="Reactome" id="R-MMU-9020702">
    <property type="pathway name" value="Interleukin-1 signaling"/>
</dbReference>
<dbReference type="Reactome" id="R-MMU-9664873">
    <property type="pathway name" value="Pexophagy"/>
</dbReference>
<dbReference type="Reactome" id="R-MMU-9755511">
    <property type="pathway name" value="KEAP1-NFE2L2 pathway"/>
</dbReference>
<dbReference type="BioGRID-ORCS" id="18412">
    <property type="hits" value="4 hits in 81 CRISPR screens"/>
</dbReference>
<dbReference type="CD-CODE" id="3393144B">
    <property type="entry name" value="P62 cluster"/>
</dbReference>
<dbReference type="CD-CODE" id="D12E4DB9">
    <property type="entry name" value="Stress granule"/>
</dbReference>
<dbReference type="CD-CODE" id="D41CB90A">
    <property type="entry name" value="Synthetic Condensate 000316"/>
</dbReference>
<dbReference type="CD-CODE" id="FBAE0D06">
    <property type="entry name" value="Synthetic Condensate 000291"/>
</dbReference>
<dbReference type="ChiTaRS" id="Sqstm1">
    <property type="organism name" value="mouse"/>
</dbReference>
<dbReference type="EvolutionaryTrace" id="Q64337"/>
<dbReference type="PRO" id="PR:Q64337"/>
<dbReference type="Proteomes" id="UP000000589">
    <property type="component" value="Chromosome 11"/>
</dbReference>
<dbReference type="RNAct" id="Q64337">
    <property type="molecule type" value="protein"/>
</dbReference>
<dbReference type="Bgee" id="ENSMUSG00000015837">
    <property type="expression patterns" value="Expressed in dentate gyrus of hippocampal formation granule cell and 282 other cell types or tissues"/>
</dbReference>
<dbReference type="ExpressionAtlas" id="Q64337">
    <property type="expression patterns" value="baseline and differential"/>
</dbReference>
<dbReference type="GO" id="GO:0016235">
    <property type="term" value="C:aggresome"/>
    <property type="evidence" value="ECO:0000314"/>
    <property type="project" value="MGI"/>
</dbReference>
<dbReference type="GO" id="GO:0044753">
    <property type="term" value="C:amphisome"/>
    <property type="evidence" value="ECO:0007669"/>
    <property type="project" value="Ensembl"/>
</dbReference>
<dbReference type="GO" id="GO:0044754">
    <property type="term" value="C:autolysosome"/>
    <property type="evidence" value="ECO:0000314"/>
    <property type="project" value="MGI"/>
</dbReference>
<dbReference type="GO" id="GO:0005776">
    <property type="term" value="C:autophagosome"/>
    <property type="evidence" value="ECO:0000314"/>
    <property type="project" value="MGI"/>
</dbReference>
<dbReference type="GO" id="GO:0005829">
    <property type="term" value="C:cytosol"/>
    <property type="evidence" value="ECO:0007669"/>
    <property type="project" value="UniProtKB-SubCell"/>
</dbReference>
<dbReference type="GO" id="GO:0005783">
    <property type="term" value="C:endoplasmic reticulum"/>
    <property type="evidence" value="ECO:0007669"/>
    <property type="project" value="UniProtKB-SubCell"/>
</dbReference>
<dbReference type="GO" id="GO:0098978">
    <property type="term" value="C:glutamatergic synapse"/>
    <property type="evidence" value="ECO:0007669"/>
    <property type="project" value="Ensembl"/>
</dbReference>
<dbReference type="GO" id="GO:0043232">
    <property type="term" value="C:intracellular membraneless organelle"/>
    <property type="evidence" value="ECO:0000314"/>
    <property type="project" value="UniProtKB"/>
</dbReference>
<dbReference type="GO" id="GO:0005770">
    <property type="term" value="C:late endosome"/>
    <property type="evidence" value="ECO:0007669"/>
    <property type="project" value="UniProtKB-SubCell"/>
</dbReference>
<dbReference type="GO" id="GO:0097413">
    <property type="term" value="C:Lewy body"/>
    <property type="evidence" value="ECO:0007669"/>
    <property type="project" value="Ensembl"/>
</dbReference>
<dbReference type="GO" id="GO:0005739">
    <property type="term" value="C:mitochondrion"/>
    <property type="evidence" value="ECO:0000314"/>
    <property type="project" value="UniProtKB"/>
</dbReference>
<dbReference type="GO" id="GO:0000932">
    <property type="term" value="C:P-body"/>
    <property type="evidence" value="ECO:0000250"/>
    <property type="project" value="UniProtKB"/>
</dbReference>
<dbReference type="GO" id="GO:0000407">
    <property type="term" value="C:phagophore assembly site"/>
    <property type="evidence" value="ECO:0000314"/>
    <property type="project" value="MGI"/>
</dbReference>
<dbReference type="GO" id="GO:0016605">
    <property type="term" value="C:PML body"/>
    <property type="evidence" value="ECO:0007669"/>
    <property type="project" value="UniProtKB-SubCell"/>
</dbReference>
<dbReference type="GO" id="GO:0030017">
    <property type="term" value="C:sarcomere"/>
    <property type="evidence" value="ECO:0007669"/>
    <property type="project" value="UniProtKB-SubCell"/>
</dbReference>
<dbReference type="GO" id="GO:0097225">
    <property type="term" value="C:sperm midpiece"/>
    <property type="evidence" value="ECO:0000314"/>
    <property type="project" value="MGI"/>
</dbReference>
<dbReference type="GO" id="GO:0042802">
    <property type="term" value="F:identical protein binding"/>
    <property type="evidence" value="ECO:0000314"/>
    <property type="project" value="MGI"/>
</dbReference>
<dbReference type="GO" id="GO:0035255">
    <property type="term" value="F:ionotropic glutamate receptor binding"/>
    <property type="evidence" value="ECO:0000353"/>
    <property type="project" value="ARUK-UCL"/>
</dbReference>
<dbReference type="GO" id="GO:0070530">
    <property type="term" value="F:K63-linked polyubiquitin modification-dependent protein binding"/>
    <property type="evidence" value="ECO:0000314"/>
    <property type="project" value="UniProtKB"/>
</dbReference>
<dbReference type="GO" id="GO:0140693">
    <property type="term" value="F:molecular condensate scaffold activity"/>
    <property type="evidence" value="ECO:0000314"/>
    <property type="project" value="UniProtKB"/>
</dbReference>
<dbReference type="GO" id="GO:0005080">
    <property type="term" value="F:protein kinase C binding"/>
    <property type="evidence" value="ECO:0000250"/>
    <property type="project" value="UniProtKB"/>
</dbReference>
<dbReference type="GO" id="GO:0140311">
    <property type="term" value="F:protein sequestering activity"/>
    <property type="evidence" value="ECO:0000250"/>
    <property type="project" value="UniProtKB"/>
</dbReference>
<dbReference type="GO" id="GO:0044877">
    <property type="term" value="F:protein-containing complex binding"/>
    <property type="evidence" value="ECO:0007669"/>
    <property type="project" value="Ensembl"/>
</dbReference>
<dbReference type="GO" id="GO:0030674">
    <property type="term" value="F:protein-macromolecule adaptor activity"/>
    <property type="evidence" value="ECO:0000314"/>
    <property type="project" value="UniProtKB"/>
</dbReference>
<dbReference type="GO" id="GO:0042169">
    <property type="term" value="F:SH2 domain binding"/>
    <property type="evidence" value="ECO:0000250"/>
    <property type="project" value="UniProtKB"/>
</dbReference>
<dbReference type="GO" id="GO:0035591">
    <property type="term" value="F:signaling adaptor activity"/>
    <property type="evidence" value="ECO:0007669"/>
    <property type="project" value="Ensembl"/>
</dbReference>
<dbReference type="GO" id="GO:0038023">
    <property type="term" value="F:signaling receptor activity"/>
    <property type="evidence" value="ECO:0007669"/>
    <property type="project" value="Ensembl"/>
</dbReference>
<dbReference type="GO" id="GO:0003712">
    <property type="term" value="F:transcription coregulator activity"/>
    <property type="evidence" value="ECO:0000304"/>
    <property type="project" value="MGI"/>
</dbReference>
<dbReference type="GO" id="GO:0043130">
    <property type="term" value="F:ubiquitin binding"/>
    <property type="evidence" value="ECO:0000250"/>
    <property type="project" value="UniProtKB"/>
</dbReference>
<dbReference type="GO" id="GO:0031625">
    <property type="term" value="F:ubiquitin protein ligase binding"/>
    <property type="evidence" value="ECO:0007669"/>
    <property type="project" value="Ensembl"/>
</dbReference>
<dbReference type="GO" id="GO:0140036">
    <property type="term" value="F:ubiquitin-modified protein reader activity"/>
    <property type="evidence" value="ECO:0000314"/>
    <property type="project" value="UniProtKB"/>
</dbReference>
<dbReference type="GO" id="GO:0008270">
    <property type="term" value="F:zinc ion binding"/>
    <property type="evidence" value="ECO:0007669"/>
    <property type="project" value="UniProtKB-KW"/>
</dbReference>
<dbReference type="GO" id="GO:0035973">
    <property type="term" value="P:aggrephagy"/>
    <property type="evidence" value="ECO:0000314"/>
    <property type="project" value="UniProtKB"/>
</dbReference>
<dbReference type="GO" id="GO:0006915">
    <property type="term" value="P:apoptotic process"/>
    <property type="evidence" value="ECO:0007669"/>
    <property type="project" value="UniProtKB-KW"/>
</dbReference>
<dbReference type="GO" id="GO:0006914">
    <property type="term" value="P:autophagy"/>
    <property type="evidence" value="ECO:0000314"/>
    <property type="project" value="UniProtKB"/>
</dbReference>
<dbReference type="GO" id="GO:0070342">
    <property type="term" value="P:brown fat cell proliferation"/>
    <property type="evidence" value="ECO:0000315"/>
    <property type="project" value="MGI"/>
</dbReference>
<dbReference type="GO" id="GO:0030154">
    <property type="term" value="P:cell differentiation"/>
    <property type="evidence" value="ECO:0007669"/>
    <property type="project" value="UniProtKB-KW"/>
</dbReference>
<dbReference type="GO" id="GO:0007032">
    <property type="term" value="P:endosome organization"/>
    <property type="evidence" value="ECO:0000250"/>
    <property type="project" value="UniProtKB"/>
</dbReference>
<dbReference type="GO" id="GO:0097009">
    <property type="term" value="P:energy homeostasis"/>
    <property type="evidence" value="ECO:0000315"/>
    <property type="project" value="MGI"/>
</dbReference>
<dbReference type="GO" id="GO:0002376">
    <property type="term" value="P:immune system process"/>
    <property type="evidence" value="ECO:0007669"/>
    <property type="project" value="UniProtKB-KW"/>
</dbReference>
<dbReference type="GO" id="GO:0016236">
    <property type="term" value="P:macroautophagy"/>
    <property type="evidence" value="ECO:0000250"/>
    <property type="project" value="UniProtKB"/>
</dbReference>
<dbReference type="GO" id="GO:0140694">
    <property type="term" value="P:membraneless organelle assembly"/>
    <property type="evidence" value="ECO:0000314"/>
    <property type="project" value="UniProtKB"/>
</dbReference>
<dbReference type="GO" id="GO:0000423">
    <property type="term" value="P:mitophagy"/>
    <property type="evidence" value="ECO:0007669"/>
    <property type="project" value="Ensembl"/>
</dbReference>
<dbReference type="GO" id="GO:0110076">
    <property type="term" value="P:negative regulation of ferroptosis"/>
    <property type="evidence" value="ECO:0000250"/>
    <property type="project" value="UniProtKB"/>
</dbReference>
<dbReference type="GO" id="GO:0031397">
    <property type="term" value="P:negative regulation of protein ubiquitination"/>
    <property type="evidence" value="ECO:0000314"/>
    <property type="project" value="UniProtKB"/>
</dbReference>
<dbReference type="GO" id="GO:0034144">
    <property type="term" value="P:negative regulation of toll-like receptor 4 signaling pathway"/>
    <property type="evidence" value="ECO:0007669"/>
    <property type="project" value="Ensembl"/>
</dbReference>
<dbReference type="GO" id="GO:0000122">
    <property type="term" value="P:negative regulation of transcription by RNA polymerase II"/>
    <property type="evidence" value="ECO:0000315"/>
    <property type="project" value="MGI"/>
</dbReference>
<dbReference type="GO" id="GO:0000425">
    <property type="term" value="P:pexophagy"/>
    <property type="evidence" value="ECO:0000250"/>
    <property type="project" value="UniProtKB"/>
</dbReference>
<dbReference type="GO" id="GO:0010508">
    <property type="term" value="P:positive regulation of autophagy"/>
    <property type="evidence" value="ECO:0007669"/>
    <property type="project" value="Ensembl"/>
</dbReference>
<dbReference type="GO" id="GO:1900273">
    <property type="term" value="P:positive regulation of long-term synaptic potentiation"/>
    <property type="evidence" value="ECO:0000315"/>
    <property type="project" value="ARUK-UCL"/>
</dbReference>
<dbReference type="GO" id="GO:1903078">
    <property type="term" value="P:positive regulation of protein localization to plasma membrane"/>
    <property type="evidence" value="ECO:0000315"/>
    <property type="project" value="ARUK-UCL"/>
</dbReference>
<dbReference type="GO" id="GO:0030163">
    <property type="term" value="P:protein catabolic process"/>
    <property type="evidence" value="ECO:0000250"/>
    <property type="project" value="UniProtKB"/>
</dbReference>
<dbReference type="GO" id="GO:0006606">
    <property type="term" value="P:protein import into nucleus"/>
    <property type="evidence" value="ECO:0000314"/>
    <property type="project" value="MGI"/>
</dbReference>
<dbReference type="GO" id="GO:1905719">
    <property type="term" value="P:protein localization to perinuclear region of cytoplasm"/>
    <property type="evidence" value="ECO:0000250"/>
    <property type="project" value="UniProtKB"/>
</dbReference>
<dbReference type="GO" id="GO:0071211">
    <property type="term" value="P:protein targeting to vacuole involved in autophagy"/>
    <property type="evidence" value="ECO:0000250"/>
    <property type="project" value="UniProtKB"/>
</dbReference>
<dbReference type="GO" id="GO:0043122">
    <property type="term" value="P:regulation of canonical NF-kappaB signal transduction"/>
    <property type="evidence" value="ECO:0000250"/>
    <property type="project" value="UniProtKB"/>
</dbReference>
<dbReference type="GO" id="GO:0061635">
    <property type="term" value="P:regulation of protein complex stability"/>
    <property type="evidence" value="ECO:0007669"/>
    <property type="project" value="Ensembl"/>
</dbReference>
<dbReference type="GO" id="GO:0002931">
    <property type="term" value="P:response to ischemia"/>
    <property type="evidence" value="ECO:0007669"/>
    <property type="project" value="Ensembl"/>
</dbReference>
<dbReference type="GO" id="GO:0098780">
    <property type="term" value="P:response to mitochondrial depolarisation"/>
    <property type="evidence" value="ECO:0007669"/>
    <property type="project" value="Ensembl"/>
</dbReference>
<dbReference type="GO" id="GO:0001659">
    <property type="term" value="P:temperature homeostasis"/>
    <property type="evidence" value="ECO:0000315"/>
    <property type="project" value="MGI"/>
</dbReference>
<dbReference type="GO" id="GO:0006366">
    <property type="term" value="P:transcription by RNA polymerase II"/>
    <property type="evidence" value="ECO:0000315"/>
    <property type="project" value="MGI"/>
</dbReference>
<dbReference type="CDD" id="cd06402">
    <property type="entry name" value="PB1_p62"/>
    <property type="match status" value="1"/>
</dbReference>
<dbReference type="CDD" id="cd14320">
    <property type="entry name" value="UBA_SQSTM"/>
    <property type="match status" value="1"/>
</dbReference>
<dbReference type="CDD" id="cd02340">
    <property type="entry name" value="ZZ_NBR1_like"/>
    <property type="match status" value="1"/>
</dbReference>
<dbReference type="FunFam" id="1.10.8.10:FF:000034">
    <property type="entry name" value="Sequestosome 1"/>
    <property type="match status" value="1"/>
</dbReference>
<dbReference type="FunFam" id="3.10.20.90:FF:000169">
    <property type="entry name" value="Sequestosome 1"/>
    <property type="match status" value="1"/>
</dbReference>
<dbReference type="FunFam" id="3.30.60.90:FF:000012">
    <property type="entry name" value="Sequestosome 1"/>
    <property type="match status" value="1"/>
</dbReference>
<dbReference type="Gene3D" id="3.30.60.90">
    <property type="match status" value="1"/>
</dbReference>
<dbReference type="Gene3D" id="1.10.8.10">
    <property type="entry name" value="DNA helicase RuvA subunit, C-terminal domain"/>
    <property type="match status" value="1"/>
</dbReference>
<dbReference type="Gene3D" id="3.10.20.90">
    <property type="entry name" value="Phosphatidylinositol 3-kinase Catalytic Subunit, Chain A, domain 1"/>
    <property type="match status" value="1"/>
</dbReference>
<dbReference type="IDEAL" id="IID50150"/>
<dbReference type="InterPro" id="IPR052260">
    <property type="entry name" value="Autophagy_Rcpt_SigReg"/>
</dbReference>
<dbReference type="InterPro" id="IPR053793">
    <property type="entry name" value="PB1-like"/>
</dbReference>
<dbReference type="InterPro" id="IPR000270">
    <property type="entry name" value="PB1_dom"/>
</dbReference>
<dbReference type="InterPro" id="IPR034866">
    <property type="entry name" value="PB1_p62"/>
</dbReference>
<dbReference type="InterPro" id="IPR033741">
    <property type="entry name" value="SQSTM_UBA"/>
</dbReference>
<dbReference type="InterPro" id="IPR015940">
    <property type="entry name" value="UBA"/>
</dbReference>
<dbReference type="InterPro" id="IPR009060">
    <property type="entry name" value="UBA-like_sf"/>
</dbReference>
<dbReference type="InterPro" id="IPR000433">
    <property type="entry name" value="Znf_ZZ"/>
</dbReference>
<dbReference type="InterPro" id="IPR043145">
    <property type="entry name" value="Znf_ZZ_sf"/>
</dbReference>
<dbReference type="PANTHER" id="PTHR15090">
    <property type="entry name" value="SEQUESTOSOME 1-RELATED"/>
    <property type="match status" value="1"/>
</dbReference>
<dbReference type="PANTHER" id="PTHR15090:SF0">
    <property type="entry name" value="SEQUESTOSOME-1"/>
    <property type="match status" value="1"/>
</dbReference>
<dbReference type="Pfam" id="PF00564">
    <property type="entry name" value="PB1"/>
    <property type="match status" value="1"/>
</dbReference>
<dbReference type="Pfam" id="PF16577">
    <property type="entry name" value="UBA_5"/>
    <property type="match status" value="1"/>
</dbReference>
<dbReference type="Pfam" id="PF00569">
    <property type="entry name" value="ZZ"/>
    <property type="match status" value="1"/>
</dbReference>
<dbReference type="SMART" id="SM00666">
    <property type="entry name" value="PB1"/>
    <property type="match status" value="1"/>
</dbReference>
<dbReference type="SMART" id="SM00165">
    <property type="entry name" value="UBA"/>
    <property type="match status" value="1"/>
</dbReference>
<dbReference type="SMART" id="SM00291">
    <property type="entry name" value="ZnF_ZZ"/>
    <property type="match status" value="1"/>
</dbReference>
<dbReference type="SUPFAM" id="SSF54277">
    <property type="entry name" value="CAD &amp; PB1 domains"/>
    <property type="match status" value="1"/>
</dbReference>
<dbReference type="SUPFAM" id="SSF57850">
    <property type="entry name" value="RING/U-box"/>
    <property type="match status" value="1"/>
</dbReference>
<dbReference type="SUPFAM" id="SSF46934">
    <property type="entry name" value="UBA-like"/>
    <property type="match status" value="1"/>
</dbReference>
<dbReference type="PROSITE" id="PS51745">
    <property type="entry name" value="PB1"/>
    <property type="match status" value="1"/>
</dbReference>
<dbReference type="PROSITE" id="PS50030">
    <property type="entry name" value="UBA"/>
    <property type="match status" value="1"/>
</dbReference>
<dbReference type="PROSITE" id="PS01357">
    <property type="entry name" value="ZF_ZZ_1"/>
    <property type="match status" value="1"/>
</dbReference>
<dbReference type="PROSITE" id="PS50135">
    <property type="entry name" value="ZF_ZZ_2"/>
    <property type="match status" value="1"/>
</dbReference>
<accession>Q64337</accession>
<accession>Q99JM8</accession>
<name>SQSTM_MOUSE</name>
<protein>
    <recommendedName>
        <fullName evidence="31">Sequestosome-1</fullName>
    </recommendedName>
    <alternativeName>
        <fullName>STONE14</fullName>
    </alternativeName>
    <alternativeName>
        <fullName>Ubiquitin-binding protein p62</fullName>
    </alternativeName>
</protein>
<gene>
    <name evidence="30 32" type="primary">Sqstm1</name>
    <name evidence="27" type="synonym">A170</name>
    <name evidence="27" type="synonym">STAP</name>
</gene>
<proteinExistence type="evidence at protein level"/>
<comment type="function">
    <text evidence="2 10 13 15 16 20 22 23 24">Molecular adapter required for selective macroautophagy (aggrephagy) by acting as a bridge between polyubiquitinated proteins and autophagosomes (PubMed:25723488, PubMed:33397898, PubMed:37306101). Promotes the recruitment of ubiquitinated cargo proteins to autophagosomes via multiple domains that bridge proteins and organelles in different steps (PubMed:25723488, PubMed:33397898). SQSTM1 first mediates the assembly and removal of ubiquitinated proteins by undergoing liquid-liquid phase separation upon binding to ubiquitinated proteins via its UBA domain, leading to the formation of insoluble cytoplasmic inclusions, known as p62 bodies (PubMed:33397898). SQSTM1 then interacts with ATG8 family proteins on autophagosomes via its LIR motif, leading to p62 body recruitment to autophagosomes, followed by autophagic clearance of ubiquitinated proteins (PubMed:33397898). SQSTM1 is itself degraded along with its ubiquitinated cargos (By similarity). Also required to recruit ubiquitinated proteins to PML bodies in the nucleus (By similarity). Also involved in autophagy of peroxisomes (pexophagy) in response to reactive oxygen species (ROS) by acting as a bridge between ubiquitinated PEX5 receptor and autophagosomes (By similarity). Acts as an activator of the NFE2L2/NRF2 pathway via interaction with KEAP1: interaction inactivates the BCR(KEAP1) complex by sequestering the complex in inclusion bodies, promoting nuclear accumulation of NFE2L2/NRF2 and subsequent expression of cytoprotective genes (PubMed:20173742, PubMed:20421418, PubMed:24011591, PubMed:33397898, PubMed:37306101). Promotes relocalization of 'Lys-63'-linked ubiquitinated STING1 to autophagosomes (By similarity). Involved in endosome organization by retaining vesicles in the perinuclear cloud: following ubiquitination by RNF26, attracts specific vesicle-associated adapters, forming a molecular bridge that restrains cognate vesicles in the perinuclear region and organizes the endosomal pathway for efficient cargo transport (By similarity). Sequesters tensin TNS2 into cytoplasmic puncta, promoting TNS2 ubiquitination and proteasomal degradation (By similarity). May regulate the activation of NFKB1 by TNF-alpha, nerve growth factor (NGF) and interleukin-1 (By similarity). May play a role in titin/TTN downstream signaling in muscle cells (By similarity). Adapter that mediates the interaction between TRAF6 and CYLD (PubMed:14960283, PubMed:18382763).</text>
</comment>
<comment type="subunit">
    <text evidence="1 2 13 15 16 17 18 19 21 23">Homooligomer or heterooligomer; may form homotypic arrays (PubMed:20173742). Dimerization interferes with ubiquitin binding (By similarity). Component of a ternary complex with PAWR and PRKCZ (By similarity). Forms a complex with JUB/Ajuba, PRKCZ and TRAF6 (By similarity). Identified in a complex with TRAF6 and CYLD (PubMed:18382763). Identified in a heterotrimeric complex with ubiquitin and ZFAND5, where ZFAND5 and SQSTM1 both interact with the same ubiquitin molecule (By similarity). Interacts (via LIR motif) with MAP1LC3A and MAP1LC3B, as well as with other ATG8 family members, including GABARAP, GABARAPL1 and GABARAPL2; these interactions are necessary for the recruitment MAP1 LC3 family members to inclusion bodies containing polyubiquitinated protein aggregates and for their degradation by autophagy (PubMed:33397898). Interacts directly with PRKCI and PRKCZ (By similarity). Interacts with EBI3, LCK, RASA1, NR2F2, NTRK1, NTRK2, NTRK3, NBR1, MAP2K5 and MAPKAPK5 (By similarity). Upon TNF-alpha stimulation, interacts with RIPK1 probably bridging IKBKB to the TNF-R1 complex composed of TNF-R1/TNFRSF1A, TRADD and RIPK1 (By similarity). Interacts with the proteasome subunits PSMD4 and PSMC2 (By similarity). Interacts with TRAF6 (By similarity). Interacts with 'Lys-63'-linked polyubiquitinated MAPT/TAU (By similarity). Interacts with FHOD3 (By similarity). Interacts with CYLD (By similarity). Interacts with SESN1 (By similarity). Interacts with SESN2 (By similarity). Interacts with ULK1 (PubMed:25040165). Interacts with UBD (By similarity). Interacts with WDR81; the interaction is direct and regulates the interaction of SQSTM1 with ubiquitinated proteins (By similarity). Interacts with WDFY3; this interaction is required to recruit WDFY3 to cytoplasmic bodies and to PML bodies (By similarity). Interacts with LRRC25 (By similarity). Interacts with STING1; leading to relocalization of STING1 to autophagosomes (By similarity). Interacts (when phosphorylated at Ser-351) with KEAP1; the interaction is direct and inactivates the BCR(KEAP1) complex by sequestering KEAP1 in inclusion bodies, promoting its degradation (PubMed:20421418, PubMed:20495340). Interacts with MOAP1; promoting dissociation of SQSTM1 inclusion bodies that sequester KEAP1 (By similarity). Interacts with GBP1 (PubMed:21551061). Interacts with TAX1BP1 (By similarity). Interacts with (ubiquitinated) PEX5; specifically binds PEX5 ubiquitinated at 'Lys-209' in response to reactive oxygen species (ROS) (By similarity). Interacts (via PB1 domain) with TNS2; the interaction leads to sequestration of TNS2 in cytoplasmic aggregates with SQSTM1 and promotes TNS2 ubiquitination and proteasomal degradation (By similarity). Interacts with IRS1; the interaction is disrupted by the presence of tensin TNS2 (By similarity). Interacts with TRIM5 (By similarity). Interacts with TRIM11 (when ubiquitinated); promoting AIM2 recruitment to autophagosomes and autophagy-dependent degradation of AIM2 (By similarity). Interacts with TRIM13 (By similarity). Interacts with TRIM16 (By similarity). Interacts with TRIM23 (By similarity). Interacts with TRIM50 (PubMed:22792322). Interacts with TRIM55 (By similarity). Interacts with ECSIT; this interaction inhibits TLR4 signaling via functional regulation of the TRAF6-ECSIT complex (By similarity). Interacts with GABRR1, GABRR2 and GABRR3 (By similarity). Interacts with WDR83 (By similarity). Interacts with GRB2 (By similarity). Interacts with USP12; the interaction is independent of USP12 deubiquitinase activity and may be involved in regulation of autophagic flux (By similarity). Interacts with ASB6 (By similarity).</text>
</comment>
<comment type="interaction">
    <interactant intactId="EBI-645025">
        <id>Q64337</id>
    </interactant>
    <interactant intactId="EBI-647110">
        <id>Q9Z2X8</id>
        <label>Keap1</label>
    </interactant>
    <organismsDiffer>false</organismsDiffer>
    <experiments>6</experiments>
</comment>
<comment type="interaction">
    <interactant intactId="EBI-645025">
        <id>Q64337</id>
    </interactant>
    <interactant intactId="EBI-446144">
        <id>Q9WVS7</id>
        <label>Map2k5</label>
    </interactant>
    <organismsDiffer>false</organismsDiffer>
    <experiments>3</experiments>
</comment>
<comment type="interaction">
    <interactant intactId="EBI-645025">
        <id>Q64337</id>
    </interactant>
    <interactant intactId="EBI-346715">
        <id>P28700</id>
        <label>Rxra</label>
    </interactant>
    <organismsDiffer>false</organismsDiffer>
    <experiments>3</experiments>
</comment>
<comment type="interaction">
    <interactant intactId="EBI-645025">
        <id>Q64337</id>
    </interactant>
    <interactant intactId="EBI-346797">
        <id>P48281</id>
        <label>Vdr</label>
    </interactant>
    <organismsDiffer>false</organismsDiffer>
    <experiments>3</experiments>
</comment>
<comment type="interaction">
    <interactant intactId="EBI-645025">
        <id>Q64337</id>
    </interactant>
    <interactant intactId="EBI-751001">
        <id>Q14145</id>
        <label>KEAP1</label>
    </interactant>
    <organismsDiffer>true</organismsDiffer>
    <experiments>2</experiments>
</comment>
<comment type="interaction">
    <interactant intactId="EBI-645025">
        <id>Q64337</id>
    </interactant>
    <interactant intactId="EBI-373144">
        <id>Q9GZQ8</id>
        <label>MAP1LC3B</label>
    </interactant>
    <organismsDiffer>true</organismsDiffer>
    <experiments>6</experiments>
</comment>
<comment type="subcellular location">
    <subcellularLocation>
        <location evidence="2">Cytoplasmic vesicle</location>
        <location evidence="2">Autophagosome</location>
    </subcellularLocation>
    <subcellularLocation>
        <location evidence="2">Preautophagosomal structure</location>
    </subcellularLocation>
    <subcellularLocation>
        <location evidence="12 19 23">Cytoplasm</location>
        <location evidence="12 19 23">Cytosol</location>
    </subcellularLocation>
    <subcellularLocation>
        <location evidence="2">Nucleus</location>
        <location evidence="2">PML body</location>
    </subcellularLocation>
    <subcellularLocation>
        <location evidence="2">Late endosome</location>
    </subcellularLocation>
    <subcellularLocation>
        <location evidence="2">Lysosome</location>
    </subcellularLocation>
    <subcellularLocation>
        <location evidence="12">Nucleus</location>
    </subcellularLocation>
    <subcellularLocation>
        <location evidence="2">Endoplasmic reticulum</location>
    </subcellularLocation>
    <subcellularLocation>
        <location evidence="1">Cytoplasm</location>
        <location evidence="1">Myofibril</location>
        <location evidence="1">Sarcomere</location>
    </subcellularLocation>
    <text evidence="1 2 16 23">In cardiac muscle, localizes to the sarcomeric band (By similarity). Localizes to cytoplasmic membraneless inclusion bodies, known as p62 bodies, containing polyubiquitinated protein aggregates (PubMed:20421418, PubMed:33397898). In protein aggregate diseases of the liver, found in large amounts in Mallory bodies of alcoholic and nonalcoholic steatohepatitis, hyaline bodies in hepatocellular carcinoma, and in SERPINA1 aggregates (By similarity). Enriched in Rosenthal fibers of pilocytic astrocytoma (By similarity). In the cytoplasm, observed in both membrane-free ubiquitin-containing protein aggregates (sequestosomes) and membrane-surrounded autophagosomes (By similarity). Colocalizes with TRIM13 in the perinuclear endoplasmic reticulum (By similarity). Co-localizes with TRIM5 in cytoplasmic bodies (By similarity). When nuclear export is blocked by treatment with leptomycin B, accumulates in PML bodies (By similarity).</text>
</comment>
<comment type="alternative products">
    <event type="alternative splicing"/>
    <isoform>
        <id>Q64337-1</id>
        <name>1</name>
        <sequence type="displayed"/>
    </isoform>
    <isoform>
        <id>Q64337-2</id>
        <name>2</name>
        <sequence type="described" ref="VSP_015842"/>
    </isoform>
</comment>
<comment type="tissue specificity">
    <text evidence="7">Widely expressed.</text>
</comment>
<comment type="induction">
    <text evidence="7 8 9 10 11 25 26">By diethylmaleate, paraquat, menadione, sodium arsenite and cadmium chloride, arsenite and arsenate. By MG132, MG115, lactacystin and proteasome inhibitor I (PSI). By serum starvation, okadaic acid and glucose oxidase. Also up-regulated by RANK-L (at protein level). By etoposide and trichostatin. By the parkinsonian mimetic 6-hydroxydopamine (6-OHDA). By TGF-beta.</text>
</comment>
<comment type="domain">
    <text evidence="2 22">The UBA domain binds specifically 'Lys-63'-linked polyubiquitin chains of polyubiquitinated substrates (PubMed:25723488). Mediates the interaction with TRIM55 (By similarity). Both the UBA and PB1 domains are necessary and sufficient for the localization into the ubiquitin-containing inclusion bodies (By similarity).</text>
</comment>
<comment type="domain">
    <text evidence="2">The PB1 domain mediates homooligomerization and interactions with FHOD3, MAP2K5, NBR1, PRKCI, PRKCZ and WDR81. Both the PB1 and UBA domains are necessary and sufficient for the localization into the ubiquitin-containing inclusion bodies.</text>
</comment>
<comment type="domain">
    <text evidence="2">The ZZ-type zinc finger mediates the interaction with RIPK1.</text>
</comment>
<comment type="domain">
    <text evidence="23">The LIR (LC3-interacting region) motif mediates the interaction with ATG8 family proteins.</text>
</comment>
<comment type="PTM">
    <text evidence="2 20 22 24">Phosphorylation at Ser-409 by ULK1 destabilizes the UBA dimer interface and increases binding affinity to ubiquitinated proteins (PubMed:25723488). Phosphorylation at Ser-409 also primes for subsequent phosphorylation at Ser-405 (PubMed:25723488). Phosphorylation at Ser-405 by CK2 or ULK1 promotes binding to ubiquitinated proteins by increasing the affinity between the UBA domain and polyubiquitin chains (By similarity). Phosphorylation at Ser-405 by ULK1 is stimulated by SESN2 (By similarity). Phosphorylated at Ser-405 by TBK1, leading to promote relocalization of 'Lys-63'-linked ubiquitinated STING1 to autophagosomes (By similarity). Phosphorylation at Ser-351 by ULK1 promotes interaction with KEAP1 and inactivation of the BCR(KEAP1) complex, promoting NFE2L2/NRF2 nuclear accumulation and expression of phase II detoxifying enzymes (PubMed:24011591, PubMed:37306101). Phosphorylated in vitro by TTN (By similarity).</text>
</comment>
<comment type="PTM">
    <text evidence="2">Ubiquitinated by UBE2J1 and RNF26 at Lys-437: ubiquitinated SQSTM1 attracts specific vesicle-associated adapters, forming a molecular bridge that restrains cognate vesicles in the perinuclear region and organizes the endosomal pathway for efficient cargo transport. Ubiquitination by UBE2D2 and UBE2D3 increases its ability to bind polyubiquitin chains by destabilizing the UBA dimer interface. Deubiquitination by USP15 releases target vesicles for fast transport into the cell periphery. Ubiquitinated by the BCR(KEAP1) complex at Lys-422, increasing SQSTM1 sequestering activity and promoting its degradation. Ubiquitinated via 'Lys-29' and 'Lys-33'-linked polyubiquitination leading to xenophagic targeting of bacteria and inhibition of their replication.</text>
</comment>
<comment type="PTM">
    <text evidence="2">Acetylated at Lys-422 and Lys-437 by KAT5/TIP60, promotes activity by destabilizing the UBA dimer interface and increases binding affinity to ubiquitinated proteins. Deacetylated by HDAC6.</text>
</comment>
<comment type="PTM">
    <text evidence="2">Palmitoylation at Cys-291 by ZDHHC19 is required for efficient autophagic degradation of SQSTM1-cargo complexes by promoting affinity for ATG8 proteins and recruitment of p62 bodies to autophagosomes. Dealmitoylated at Cys-291 by LYPLA1.</text>
</comment>
<comment type="disruption phenotype">
    <text evidence="10">Impaired induced osteoclastogenesis.</text>
</comment>
<organism evidence="33">
    <name type="scientific">Mus musculus</name>
    <name type="common">Mouse</name>
    <dbReference type="NCBI Taxonomy" id="10090"/>
    <lineage>
        <taxon>Eukaryota</taxon>
        <taxon>Metazoa</taxon>
        <taxon>Chordata</taxon>
        <taxon>Craniata</taxon>
        <taxon>Vertebrata</taxon>
        <taxon>Euteleostomi</taxon>
        <taxon>Mammalia</taxon>
        <taxon>Eutheria</taxon>
        <taxon>Euarchontoglires</taxon>
        <taxon>Glires</taxon>
        <taxon>Rodentia</taxon>
        <taxon>Myomorpha</taxon>
        <taxon>Muroidea</taxon>
        <taxon>Muridae</taxon>
        <taxon>Murinae</taxon>
        <taxon>Mus</taxon>
        <taxon>Mus</taxon>
    </lineage>
</organism>
<reference key="1">
    <citation type="journal article" date="1996" name="Biochem. Biophys. Res. Commun.">
        <title>Murine peritoneal macrophages induce a novel 60-kDa protein with structural similarity to a tyrosine kinase p56lck-associated protein in response to oxidative stress.</title>
        <authorList>
            <person name="Ishii T."/>
            <person name="Yanagawa T."/>
            <person name="Kawane T."/>
            <person name="Yuki K."/>
            <person name="Seita J."/>
            <person name="Yoshida H."/>
            <person name="Bannai S."/>
        </authorList>
    </citation>
    <scope>NUCLEOTIDE SEQUENCE [MRNA] (ISOFORM 1)</scope>
    <scope>INDUCTION</scope>
    <source>
        <strain>ddY</strain>
        <tissue>Macrophage</tissue>
    </source>
</reference>
<reference key="2">
    <citation type="submission" date="1996-05" db="EMBL/GenBank/DDBJ databases">
        <title>Murine cDNA similar to EBI3-associated protein p60 mRNA.</title>
        <authorList>
            <person name="Morris J.C."/>
            <person name="Long A."/>
            <person name="Finnerty H."/>
            <person name="Fitz L."/>
            <person name="Towler P."/>
            <person name="Turner K."/>
            <person name="Wood C.R."/>
        </authorList>
    </citation>
    <scope>NUCLEOTIDE SEQUENCE [MRNA] (ISOFORM 1)</scope>
    <source>
        <strain>BALB/cJ</strain>
    </source>
</reference>
<reference key="3">
    <citation type="journal article" date="2005" name="Science">
        <title>The transcriptional landscape of the mammalian genome.</title>
        <authorList>
            <person name="Carninci P."/>
            <person name="Kasukawa T."/>
            <person name="Katayama S."/>
            <person name="Gough J."/>
            <person name="Frith M.C."/>
            <person name="Maeda N."/>
            <person name="Oyama R."/>
            <person name="Ravasi T."/>
            <person name="Lenhard B."/>
            <person name="Wells C."/>
            <person name="Kodzius R."/>
            <person name="Shimokawa K."/>
            <person name="Bajic V.B."/>
            <person name="Brenner S.E."/>
            <person name="Batalov S."/>
            <person name="Forrest A.R."/>
            <person name="Zavolan M."/>
            <person name="Davis M.J."/>
            <person name="Wilming L.G."/>
            <person name="Aidinis V."/>
            <person name="Allen J.E."/>
            <person name="Ambesi-Impiombato A."/>
            <person name="Apweiler R."/>
            <person name="Aturaliya R.N."/>
            <person name="Bailey T.L."/>
            <person name="Bansal M."/>
            <person name="Baxter L."/>
            <person name="Beisel K.W."/>
            <person name="Bersano T."/>
            <person name="Bono H."/>
            <person name="Chalk A.M."/>
            <person name="Chiu K.P."/>
            <person name="Choudhary V."/>
            <person name="Christoffels A."/>
            <person name="Clutterbuck D.R."/>
            <person name="Crowe M.L."/>
            <person name="Dalla E."/>
            <person name="Dalrymple B.P."/>
            <person name="de Bono B."/>
            <person name="Della Gatta G."/>
            <person name="di Bernardo D."/>
            <person name="Down T."/>
            <person name="Engstrom P."/>
            <person name="Fagiolini M."/>
            <person name="Faulkner G."/>
            <person name="Fletcher C.F."/>
            <person name="Fukushima T."/>
            <person name="Furuno M."/>
            <person name="Futaki S."/>
            <person name="Gariboldi M."/>
            <person name="Georgii-Hemming P."/>
            <person name="Gingeras T.R."/>
            <person name="Gojobori T."/>
            <person name="Green R.E."/>
            <person name="Gustincich S."/>
            <person name="Harbers M."/>
            <person name="Hayashi Y."/>
            <person name="Hensch T.K."/>
            <person name="Hirokawa N."/>
            <person name="Hill D."/>
            <person name="Huminiecki L."/>
            <person name="Iacono M."/>
            <person name="Ikeo K."/>
            <person name="Iwama A."/>
            <person name="Ishikawa T."/>
            <person name="Jakt M."/>
            <person name="Kanapin A."/>
            <person name="Katoh M."/>
            <person name="Kawasawa Y."/>
            <person name="Kelso J."/>
            <person name="Kitamura H."/>
            <person name="Kitano H."/>
            <person name="Kollias G."/>
            <person name="Krishnan S.P."/>
            <person name="Kruger A."/>
            <person name="Kummerfeld S.K."/>
            <person name="Kurochkin I.V."/>
            <person name="Lareau L.F."/>
            <person name="Lazarevic D."/>
            <person name="Lipovich L."/>
            <person name="Liu J."/>
            <person name="Liuni S."/>
            <person name="McWilliam S."/>
            <person name="Madan Babu M."/>
            <person name="Madera M."/>
            <person name="Marchionni L."/>
            <person name="Matsuda H."/>
            <person name="Matsuzawa S."/>
            <person name="Miki H."/>
            <person name="Mignone F."/>
            <person name="Miyake S."/>
            <person name="Morris K."/>
            <person name="Mottagui-Tabar S."/>
            <person name="Mulder N."/>
            <person name="Nakano N."/>
            <person name="Nakauchi H."/>
            <person name="Ng P."/>
            <person name="Nilsson R."/>
            <person name="Nishiguchi S."/>
            <person name="Nishikawa S."/>
            <person name="Nori F."/>
            <person name="Ohara O."/>
            <person name="Okazaki Y."/>
            <person name="Orlando V."/>
            <person name="Pang K.C."/>
            <person name="Pavan W.J."/>
            <person name="Pavesi G."/>
            <person name="Pesole G."/>
            <person name="Petrovsky N."/>
            <person name="Piazza S."/>
            <person name="Reed J."/>
            <person name="Reid J.F."/>
            <person name="Ring B.Z."/>
            <person name="Ringwald M."/>
            <person name="Rost B."/>
            <person name="Ruan Y."/>
            <person name="Salzberg S.L."/>
            <person name="Sandelin A."/>
            <person name="Schneider C."/>
            <person name="Schoenbach C."/>
            <person name="Sekiguchi K."/>
            <person name="Semple C.A."/>
            <person name="Seno S."/>
            <person name="Sessa L."/>
            <person name="Sheng Y."/>
            <person name="Shibata Y."/>
            <person name="Shimada H."/>
            <person name="Shimada K."/>
            <person name="Silva D."/>
            <person name="Sinclair B."/>
            <person name="Sperling S."/>
            <person name="Stupka E."/>
            <person name="Sugiura K."/>
            <person name="Sultana R."/>
            <person name="Takenaka Y."/>
            <person name="Taki K."/>
            <person name="Tammoja K."/>
            <person name="Tan S.L."/>
            <person name="Tang S."/>
            <person name="Taylor M.S."/>
            <person name="Tegner J."/>
            <person name="Teichmann S.A."/>
            <person name="Ueda H.R."/>
            <person name="van Nimwegen E."/>
            <person name="Verardo R."/>
            <person name="Wei C.L."/>
            <person name="Yagi K."/>
            <person name="Yamanishi H."/>
            <person name="Zabarovsky E."/>
            <person name="Zhu S."/>
            <person name="Zimmer A."/>
            <person name="Hide W."/>
            <person name="Bult C."/>
            <person name="Grimmond S.M."/>
            <person name="Teasdale R.D."/>
            <person name="Liu E.T."/>
            <person name="Brusic V."/>
            <person name="Quackenbush J."/>
            <person name="Wahlestedt C."/>
            <person name="Mattick J.S."/>
            <person name="Hume D.A."/>
            <person name="Kai C."/>
            <person name="Sasaki D."/>
            <person name="Tomaru Y."/>
            <person name="Fukuda S."/>
            <person name="Kanamori-Katayama M."/>
            <person name="Suzuki M."/>
            <person name="Aoki J."/>
            <person name="Arakawa T."/>
            <person name="Iida J."/>
            <person name="Imamura K."/>
            <person name="Itoh M."/>
            <person name="Kato T."/>
            <person name="Kawaji H."/>
            <person name="Kawagashira N."/>
            <person name="Kawashima T."/>
            <person name="Kojima M."/>
            <person name="Kondo S."/>
            <person name="Konno H."/>
            <person name="Nakano K."/>
            <person name="Ninomiya N."/>
            <person name="Nishio T."/>
            <person name="Okada M."/>
            <person name="Plessy C."/>
            <person name="Shibata K."/>
            <person name="Shiraki T."/>
            <person name="Suzuki S."/>
            <person name="Tagami M."/>
            <person name="Waki K."/>
            <person name="Watahiki A."/>
            <person name="Okamura-Oho Y."/>
            <person name="Suzuki H."/>
            <person name="Kawai J."/>
            <person name="Hayashizaki Y."/>
        </authorList>
    </citation>
    <scope>NUCLEOTIDE SEQUENCE [LARGE SCALE MRNA] (ISOFORM 2)</scope>
    <source>
        <strain>C57BL/6J</strain>
        <tissue>Skin</tissue>
    </source>
</reference>
<reference key="4">
    <citation type="journal article" date="2009" name="PLoS Biol.">
        <title>Lineage-specific biology revealed by a finished genome assembly of the mouse.</title>
        <authorList>
            <person name="Church D.M."/>
            <person name="Goodstadt L."/>
            <person name="Hillier L.W."/>
            <person name="Zody M.C."/>
            <person name="Goldstein S."/>
            <person name="She X."/>
            <person name="Bult C.J."/>
            <person name="Agarwala R."/>
            <person name="Cherry J.L."/>
            <person name="DiCuccio M."/>
            <person name="Hlavina W."/>
            <person name="Kapustin Y."/>
            <person name="Meric P."/>
            <person name="Maglott D."/>
            <person name="Birtle Z."/>
            <person name="Marques A.C."/>
            <person name="Graves T."/>
            <person name="Zhou S."/>
            <person name="Teague B."/>
            <person name="Potamousis K."/>
            <person name="Churas C."/>
            <person name="Place M."/>
            <person name="Herschleb J."/>
            <person name="Runnheim R."/>
            <person name="Forrest D."/>
            <person name="Amos-Landgraf J."/>
            <person name="Schwartz D.C."/>
            <person name="Cheng Z."/>
            <person name="Lindblad-Toh K."/>
            <person name="Eichler E.E."/>
            <person name="Ponting C.P."/>
        </authorList>
    </citation>
    <scope>NUCLEOTIDE SEQUENCE [LARGE SCALE GENOMIC DNA]</scope>
    <source>
        <strain>C57BL/6J</strain>
    </source>
</reference>
<reference key="5">
    <citation type="journal article" date="2004" name="Genome Res.">
        <title>The status, quality, and expansion of the NIH full-length cDNA project: the Mammalian Gene Collection (MGC).</title>
        <authorList>
            <consortium name="The MGC Project Team"/>
        </authorList>
    </citation>
    <scope>NUCLEOTIDE SEQUENCE [LARGE SCALE MRNA] (ISOFORM 2)</scope>
    <source>
        <strain>FVB/N</strain>
        <tissue>Mammary gland</tissue>
    </source>
</reference>
<reference key="6">
    <citation type="journal article" date="1997" name="Biochem. Biophys. Res. Commun.">
        <title>Low micromolar levels of hydrogen peroxide and proteasome inhibitors induce the 60-kDa A170 stress protein in murine peritoneal macrophages.</title>
        <authorList>
            <person name="Ishii T."/>
            <person name="Yanagawa T."/>
            <person name="Yuki K."/>
            <person name="Kawane T."/>
            <person name="Yoshida H."/>
            <person name="Bannai S."/>
        </authorList>
    </citation>
    <scope>INDUCTION</scope>
</reference>
<reference key="7">
    <citation type="journal article" date="1997" name="Biochem. Biophys. Res. Commun.">
        <title>Phosphorylation of A170 stress protein by casein kinase II-like activity in macrophages.</title>
        <authorList>
            <person name="Yanagawa T."/>
            <person name="Yuki K."/>
            <person name="Yoshida H."/>
            <person name="Bannai S."/>
            <person name="Ishii T."/>
        </authorList>
    </citation>
    <scope>PHOSPHORYLATION</scope>
</reference>
<reference key="8">
    <citation type="journal article" date="1999" name="Genomics">
        <title>Cloning, expression profile, and genomic organization of the mouse STAP/A170 gene.</title>
        <authorList>
            <person name="Okazaki M."/>
            <person name="Ito S."/>
            <person name="Kawakita K."/>
            <person name="Takeshita S."/>
            <person name="Kawai S."/>
            <person name="Makishima F."/>
            <person name="Oda H."/>
            <person name="Kakinuma A."/>
        </authorList>
    </citation>
    <scope>TISSUE SPECIFICITY</scope>
    <scope>INDUCTION</scope>
</reference>
<reference key="9">
    <citation type="journal article" date="2001" name="Biochem. Biophys. Res. Commun.">
        <title>Ubiquitin-binding protein p62 expression is induced during apoptosis and proteasomal inhibition in neuronal cells.</title>
        <authorList>
            <person name="Kuusisto E."/>
            <person name="Suuronen T."/>
            <person name="Salminen A."/>
        </authorList>
    </citation>
    <scope>INDUCTION</scope>
</reference>
<reference key="10">
    <citation type="journal article" date="2003" name="Biochem. Biophys. Res. Commun.">
        <title>Activation of Nrf2 and accumulation of ubiquitinated A170 by arsenic in osteoblasts.</title>
        <authorList>
            <person name="Aono J."/>
            <person name="Yanagawa T."/>
            <person name="Itoh K."/>
            <person name="Li B."/>
            <person name="Yoshida H."/>
            <person name="Kumagai Y."/>
            <person name="Yamamoto M."/>
            <person name="Ishii T."/>
        </authorList>
    </citation>
    <scope>INDUCTION</scope>
</reference>
<reference key="11">
    <citation type="journal article" date="2004" name="Dev. Cell">
        <title>The atypical PKC-interacting protein p62 is an important mediator of RANK-activated osteoclastogenesis.</title>
        <authorList>
            <person name="Duran A."/>
            <person name="Serrano M."/>
            <person name="Leitges M."/>
            <person name="Flores J.M."/>
            <person name="Picard S."/>
            <person name="Brown J.P."/>
            <person name="Moscat J."/>
            <person name="Diaz-Meco M.T."/>
        </authorList>
    </citation>
    <scope>FUNCTION</scope>
    <scope>INDUCTION</scope>
    <scope>INTERACTION WITH TRAF6</scope>
    <scope>DISRUPTION PHENOTYPE</scope>
</reference>
<reference key="12">
    <citation type="journal article" date="2004" name="Mol. Cell. Proteomics">
        <title>Phosphoproteomic analysis of the developing mouse brain.</title>
        <authorList>
            <person name="Ballif B.A."/>
            <person name="Villen J."/>
            <person name="Beausoleil S.A."/>
            <person name="Schwartz D."/>
            <person name="Gygi S.P."/>
        </authorList>
    </citation>
    <scope>IDENTIFICATION BY MASS SPECTROMETRY [LARGE SCALE ANALYSIS]</scope>
    <source>
        <tissue>Embryonic brain</tissue>
    </source>
</reference>
<reference key="13">
    <citation type="journal article" date="2005" name="Antioxid. Redox Signal.">
        <title>Microarray expression profiling identifies early signaling transcripts associated with 6-OHDA-induced dopaminergic cell death.</title>
        <authorList>
            <person name="Holtz W.A."/>
            <person name="Turetzky J.M."/>
            <person name="O'Malley K.L."/>
        </authorList>
    </citation>
    <scope>INDUCTION</scope>
</reference>
<reference key="14">
    <citation type="journal article" date="2005" name="J. Cell Biol.">
        <title>p62/SQSTM1 forms protein aggregates degraded by autophagy and has a protective effect on huntingtin-induced cell death.</title>
        <authorList>
            <person name="Bjorkoy G."/>
            <person name="Lamark T."/>
            <person name="Brech A."/>
            <person name="Outzen H."/>
            <person name="Perander M."/>
            <person name="Overvatn A."/>
            <person name="Stenmark H."/>
            <person name="Johansen T."/>
        </authorList>
    </citation>
    <scope>SUBCELLULAR LOCATION</scope>
</reference>
<reference key="15">
    <citation type="journal article" date="2007" name="Proc. Natl. Acad. Sci. U.S.A.">
        <title>Large-scale phosphorylation analysis of mouse liver.</title>
        <authorList>
            <person name="Villen J."/>
            <person name="Beausoleil S.A."/>
            <person name="Gerber S.A."/>
            <person name="Gygi S.P."/>
        </authorList>
    </citation>
    <scope>IDENTIFICATION BY MASS SPECTROMETRY [LARGE SCALE ANALYSIS]</scope>
    <source>
        <tissue>Liver</tissue>
    </source>
</reference>
<reference key="16">
    <citation type="journal article" date="2008" name="J. Clin. Invest.">
        <title>Deubiquitinating enzyme CYLD negatively regulates RANK signaling and osteoclastogenesis in mice.</title>
        <authorList>
            <person name="Jin W."/>
            <person name="Chang M."/>
            <person name="Paul E.M."/>
            <person name="Babu G."/>
            <person name="Lee A.J."/>
            <person name="Reiley W."/>
            <person name="Wright A."/>
            <person name="Zhang M."/>
            <person name="You J."/>
            <person name="Sun S.C."/>
        </authorList>
    </citation>
    <scope>FUNCTION</scope>
    <scope>INTERACTION WITH CYLD AND TRAF6</scope>
    <scope>IDENTIFICATION IN A COMPLEX WITH CYLD AND TRAF6</scope>
</reference>
<reference key="17">
    <citation type="journal article" date="2009" name="Immunity">
        <title>The phagosomal proteome in interferon-gamma-activated macrophages.</title>
        <authorList>
            <person name="Trost M."/>
            <person name="English L."/>
            <person name="Lemieux S."/>
            <person name="Courcelles M."/>
            <person name="Desjardins M."/>
            <person name="Thibault P."/>
        </authorList>
    </citation>
    <scope>PHOSPHORYLATION [LARGE SCALE ANALYSIS] AT SER-334</scope>
    <scope>IDENTIFICATION BY MASS SPECTROMETRY [LARGE SCALE ANALYSIS]</scope>
</reference>
<reference key="18">
    <citation type="journal article" date="2009" name="Mol. Cell. Proteomics">
        <title>Large scale localization of protein phosphorylation by use of electron capture dissociation mass spectrometry.</title>
        <authorList>
            <person name="Sweet S.M."/>
            <person name="Bailey C.M."/>
            <person name="Cunningham D.L."/>
            <person name="Heath J.K."/>
            <person name="Cooper H.J."/>
        </authorList>
    </citation>
    <scope>PHOSPHORYLATION [LARGE SCALE ANALYSIS] AT SER-178; THR-269 AND THR-272</scope>
    <scope>IDENTIFICATION BY MASS SPECTROMETRY [LARGE SCALE ANALYSIS]</scope>
    <source>
        <tissue>Embryonic fibroblast</tissue>
    </source>
</reference>
<reference key="19">
    <citation type="journal article" date="2010" name="Autophagy">
        <title>Keap1 facilitates p62-mediated ubiquitin aggregate clearance via autophagy.</title>
        <authorList>
            <person name="Fan W."/>
            <person name="Tang Z."/>
            <person name="Chen D."/>
            <person name="Moughon D."/>
            <person name="Ding X."/>
            <person name="Chen S."/>
            <person name="Zhu M."/>
            <person name="Zhong Q."/>
        </authorList>
    </citation>
    <scope>INTERACTION WITH KEAP1</scope>
</reference>
<reference key="20">
    <citation type="journal article" date="2010" name="Cell">
        <title>A tissue-specific atlas of mouse protein phosphorylation and expression.</title>
        <authorList>
            <person name="Huttlin E.L."/>
            <person name="Jedrychowski M.P."/>
            <person name="Elias J.E."/>
            <person name="Goswami T."/>
            <person name="Rad R."/>
            <person name="Beausoleil S.A."/>
            <person name="Villen J."/>
            <person name="Haas W."/>
            <person name="Sowa M.E."/>
            <person name="Gygi S.P."/>
        </authorList>
    </citation>
    <scope>PHOSPHORYLATION [LARGE SCALE ANALYSIS] AT SER-24; THR-269; THR-272; SER-330; SER-334; SER-363 AND SER-367</scope>
    <scope>IDENTIFICATION BY MASS SPECTROMETRY [LARGE SCALE ANALYSIS]</scope>
    <source>
        <tissue>Brain</tissue>
        <tissue>Brown adipose tissue</tissue>
        <tissue>Heart</tissue>
        <tissue>Kidney</tissue>
        <tissue>Lung</tissue>
        <tissue>Spleen</tissue>
        <tissue>Testis</tissue>
    </source>
</reference>
<reference key="21">
    <citation type="journal article" date="2010" name="Mol. Cell. Biol.">
        <title>A noncanonical mechanism of Nrf2 activation by autophagy deficiency: direct interaction between Keap1 and p62.</title>
        <authorList>
            <person name="Lau A."/>
            <person name="Wang X.J."/>
            <person name="Zhao F."/>
            <person name="Villeneuve N.F."/>
            <person name="Wu T."/>
            <person name="Jiang T."/>
            <person name="Sun Z."/>
            <person name="White E."/>
            <person name="Zhang D.D."/>
        </authorList>
    </citation>
    <scope>FUNCTION</scope>
    <scope>SUBCELLULAR LOCATION</scope>
    <scope>INTERACTION WITH KEAP1</scope>
    <scope>MUTAGENESIS OF 349-ASP--GLU-354</scope>
</reference>
<reference key="22">
    <citation type="journal article" date="2011" name="Science">
        <title>A family of IFN-gamma-inducible 65-kD GTPases protects against bacterial infection.</title>
        <authorList>
            <person name="Kim B.H."/>
            <person name="Shenoy A.R."/>
            <person name="Kumar P."/>
            <person name="Das R."/>
            <person name="Tiwari S."/>
            <person name="MacMicking J.D."/>
        </authorList>
    </citation>
    <scope>INTERACTION WITH GBP1</scope>
</reference>
<reference key="23">
    <citation type="journal article" date="2012" name="PLoS ONE">
        <title>The E3-ubiquitin ligase TRIM50 interacts with HDAC6 and p62, and promotes the sequestration and clearance of ubiquitinated proteins into the aggresome.</title>
        <authorList>
            <person name="Fusco C."/>
            <person name="Micale L."/>
            <person name="Egorov M."/>
            <person name="Monti M."/>
            <person name="D'Addetta E.V."/>
            <person name="Augello B."/>
            <person name="Cozzolino F."/>
            <person name="Calcagni A."/>
            <person name="Fontana A."/>
            <person name="Polishchuk R.S."/>
            <person name="Didelot G."/>
            <person name="Reymond A."/>
            <person name="Pucci P."/>
            <person name="Merla G."/>
        </authorList>
    </citation>
    <scope>INTERACTION WITH TRIM50</scope>
    <scope>SUBCELLULAR LOCATION</scope>
</reference>
<reference key="24">
    <citation type="journal article" date="2014" name="FEBS J.">
        <title>Sestrin2 promotes Unc-51-like kinase 1 mediated phosphorylation of p62/sequestosome-1.</title>
        <authorList>
            <person name="Ro S.H."/>
            <person name="Semple I.A."/>
            <person name="Park H."/>
            <person name="Park H."/>
            <person name="Park H.W."/>
            <person name="Kim M."/>
            <person name="Kim J.S."/>
            <person name="Lee J.H."/>
        </authorList>
    </citation>
    <scope>INTERACTION WITH SESN2 AND ULK1</scope>
</reference>
<reference key="25">
    <citation type="journal article" date="2015" name="PLoS Genet.">
        <title>Proteotoxic stress induces phosphorylation of p62/SQSTM1 by ULK1 to regulate selective autophagic clearance of protein aggregates.</title>
        <authorList>
            <person name="Lim J."/>
            <person name="Lachenmayer M.L."/>
            <person name="Wu S."/>
            <person name="Liu W."/>
            <person name="Kundu M."/>
            <person name="Wang R."/>
            <person name="Komatsu M."/>
            <person name="Oh Y.J."/>
            <person name="Zhao Y."/>
            <person name="Yue Z."/>
        </authorList>
    </citation>
    <scope>FUNCTION</scope>
    <scope>DOMAIN</scope>
    <scope>PHOSPHORYLATION AT SER-405 AND SER-409</scope>
    <scope>MUTAGENESIS OF SER-409</scope>
</reference>
<reference key="26">
    <citation type="journal article" date="2021" name="Nat. Commun.">
        <title>p62/SQSTM1-droplet serves as a platform for autophagosome formation and anti-oxidative stress response.</title>
        <authorList>
            <person name="Kageyama S."/>
            <person name="Gudmundsson S.R."/>
            <person name="Sou Y.S."/>
            <person name="Ichimura Y."/>
            <person name="Tamura N."/>
            <person name="Kazuno S."/>
            <person name="Ueno T."/>
            <person name="Miura Y."/>
            <person name="Noshiro D."/>
            <person name="Abe M."/>
            <person name="Mizushima T."/>
            <person name="Miura N."/>
            <person name="Okuda S."/>
            <person name="Motohashi H."/>
            <person name="Lee J.A."/>
            <person name="Sakimura K."/>
            <person name="Ohe T."/>
            <person name="Noda N.N."/>
            <person name="Waguri S."/>
            <person name="Eskelinen E.L."/>
            <person name="Komatsu M."/>
        </authorList>
    </citation>
    <scope>FUNCTION</scope>
    <scope>SUBCELLULAR LOCATION</scope>
    <scope>DOMAIN</scope>
    <scope>MUTAGENESIS OF LYS-7; ASP-69; 340-TRP--LEU-343 AND THR-352</scope>
</reference>
<reference key="27">
    <citation type="journal article" date="2023" name="EMBO J.">
        <title>Phosphorylation of phase-separated p62 bodies by ULK1 activates a redox-independent stress response.</title>
        <authorList>
            <person name="Ikeda R."/>
            <person name="Noshiro D."/>
            <person name="Morishita H."/>
            <person name="Takada S."/>
            <person name="Kageyama S."/>
            <person name="Fujioka Y."/>
            <person name="Funakoshi T."/>
            <person name="Komatsu-Hirota S."/>
            <person name="Arai R."/>
            <person name="Ryzhii E."/>
            <person name="Abe M."/>
            <person name="Koga T."/>
            <person name="Motohashi H."/>
            <person name="Nakao M."/>
            <person name="Sakimura K."/>
            <person name="Horii A."/>
            <person name="Waguri S."/>
            <person name="Ichimura Y."/>
            <person name="Noda N.N."/>
            <person name="Komatsu M."/>
        </authorList>
    </citation>
    <scope>FUNCTION</scope>
    <scope>PHOSPHORYLATION AT SER-351</scope>
</reference>
<reference key="28">
    <citation type="journal article" date="2008" name="J. Biol. Chem.">
        <title>Structural basis for sorting mechanism of p62 in selective autophagy.</title>
        <authorList>
            <person name="Ichimura Y."/>
            <person name="Kumanomidou T."/>
            <person name="Sou Y.S."/>
            <person name="Mizushima T."/>
            <person name="Ezaki J."/>
            <person name="Ueno T."/>
            <person name="Kominami E."/>
            <person name="Yamane T."/>
            <person name="Tanaka K."/>
            <person name="Komatsu M."/>
        </authorList>
    </citation>
    <scope>X-RAY CRYSTALLOGRAPHY (1.56 ANGSTROMS) OF 335-344 IN COMPLEX WITH MAP1LC3B</scope>
    <scope>MUTAGENESIS OF 337-ASP--ASP-339; TRP-340 AND LEU-343</scope>
    <scope>INTERACTION WITH GABARAP AND GABARAPL2</scope>
</reference>
<reference evidence="34" key="29">
    <citation type="journal article" date="2010" name="Nat. Cell Biol.">
        <title>The selective autophagy substrate p62 activates the stress responsive transcription factor Nrf2 through inactivation of Keap1.</title>
        <authorList>
            <person name="Komatsu M."/>
            <person name="Kurokawa H."/>
            <person name="Waguri S."/>
            <person name="Taguchi K."/>
            <person name="Kobayashi A."/>
            <person name="Ichimura Y."/>
            <person name="Sou Y.S."/>
            <person name="Ueno I."/>
            <person name="Sakamoto A."/>
            <person name="Tong K.I."/>
            <person name="Kim M."/>
            <person name="Nishito Y."/>
            <person name="Iemura S."/>
            <person name="Natsume T."/>
            <person name="Ueno T."/>
            <person name="Kominami E."/>
            <person name="Motohashi H."/>
            <person name="Tanaka K."/>
            <person name="Yamamoto M."/>
        </authorList>
    </citation>
    <scope>X-RAY CRYSTALLOGRAPHY (2.80 ANGSTROMS) OF 346-359 IN COMPLEX WITH KEAP1</scope>
    <scope>FUNCTION</scope>
    <scope>SUBUNIT</scope>
    <scope>INTERACTION WITH KEAP1</scope>
    <scope>MUTAGENESIS OF LYS-7; ASP-69; ASP-349; PRO-350; SER-351; THR-352; GLY-353 AND GLU-354</scope>
</reference>
<reference evidence="35" key="30">
    <citation type="journal article" date="2013" name="Mol. Cell">
        <title>Phosphorylation of p62 activates the Keap1-Nrf2 pathway during selective autophagy.</title>
        <authorList>
            <person name="Ichimura Y."/>
            <person name="Waguri S."/>
            <person name="Sou Y.S."/>
            <person name="Kageyama S."/>
            <person name="Hasegawa J."/>
            <person name="Ishimura R."/>
            <person name="Saito T."/>
            <person name="Yang Y."/>
            <person name="Kouno T."/>
            <person name="Fukutomi T."/>
            <person name="Hoshii T."/>
            <person name="Hirao A."/>
            <person name="Takagi K."/>
            <person name="Mizushima T."/>
            <person name="Motohashi H."/>
            <person name="Lee M.S."/>
            <person name="Yoshimori T."/>
            <person name="Tanaka K."/>
            <person name="Yamamoto M."/>
            <person name="Komatsu M."/>
        </authorList>
    </citation>
    <scope>X-RAY CRYSTALLOGRAPHY (2.60 ANGSTROMS) OF 346-359 IN COMPLEX WITH KEAP1</scope>
    <scope>FUNCTION</scope>
    <scope>SUBUNIT</scope>
    <scope>INTERACTION WITH KEAP1</scope>
    <scope>PHOSPHORYLATION AT SER-351</scope>
    <scope>MUTAGENESIS OF SER-351</scope>
</reference>
<sequence>MASFTVKAYLLGKEEATREIRRFSFCFSPEPEAEAQAAAGPGPCERLLSRVAVLFPTLRPGGFQAHYRDEDGDLVAFSSDEELTMAMSYVKDDIFRIYIKEKKECRREHRPPCAQEAPRNMVHPNVICDGCNGPVVGTRYKCSVCPDYDLCSVCEGKGLHREHSKLIFPNPFGHLSDSFSHSRWLRKLKHGHFGWPGWEMGPPGNWSPRPPRAGDGRPCPTAESASAPPEDPNVNFLKNVGESVAAALSPLGIEVDIDVEHGGKRSRLTPTTPESSSTGTEDKSNTQPSSCSSEVSKPDGAGEGPAQSLTEQMKKIALESVGQPEEQMESGNCSGGDDDWTHLSSKEVDPSTGELQSLQMPESEGPSSLDPSQEGPTGLKEAALYPHLPPEADPRLIESLSQMLSMGFSDEGGWLTRLLQTKNYDIGAALDTIQYSKHPPPL</sequence>
<evidence type="ECO:0000250" key="1">
    <source>
        <dbReference type="UniProtKB" id="O08623"/>
    </source>
</evidence>
<evidence type="ECO:0000250" key="2">
    <source>
        <dbReference type="UniProtKB" id="Q13501"/>
    </source>
</evidence>
<evidence type="ECO:0000255" key="3">
    <source>
        <dbReference type="PROSITE-ProRule" id="PRU00212"/>
    </source>
</evidence>
<evidence type="ECO:0000255" key="4">
    <source>
        <dbReference type="PROSITE-ProRule" id="PRU00228"/>
    </source>
</evidence>
<evidence type="ECO:0000255" key="5">
    <source>
        <dbReference type="PROSITE-ProRule" id="PRU01081"/>
    </source>
</evidence>
<evidence type="ECO:0000256" key="6">
    <source>
        <dbReference type="SAM" id="MobiDB-lite"/>
    </source>
</evidence>
<evidence type="ECO:0000269" key="7">
    <source>
    </source>
</evidence>
<evidence type="ECO:0000269" key="8">
    <source>
    </source>
</evidence>
<evidence type="ECO:0000269" key="9">
    <source>
    </source>
</evidence>
<evidence type="ECO:0000269" key="10">
    <source>
    </source>
</evidence>
<evidence type="ECO:0000269" key="11">
    <source>
    </source>
</evidence>
<evidence type="ECO:0000269" key="12">
    <source>
    </source>
</evidence>
<evidence type="ECO:0000269" key="13">
    <source>
    </source>
</evidence>
<evidence type="ECO:0000269" key="14">
    <source>
    </source>
</evidence>
<evidence type="ECO:0000269" key="15">
    <source>
    </source>
</evidence>
<evidence type="ECO:0000269" key="16">
    <source>
    </source>
</evidence>
<evidence type="ECO:0000269" key="17">
    <source>
    </source>
</evidence>
<evidence type="ECO:0000269" key="18">
    <source>
    </source>
</evidence>
<evidence type="ECO:0000269" key="19">
    <source>
    </source>
</evidence>
<evidence type="ECO:0000269" key="20">
    <source>
    </source>
</evidence>
<evidence type="ECO:0000269" key="21">
    <source>
    </source>
</evidence>
<evidence type="ECO:0000269" key="22">
    <source>
    </source>
</evidence>
<evidence type="ECO:0000269" key="23">
    <source>
    </source>
</evidence>
<evidence type="ECO:0000269" key="24">
    <source>
    </source>
</evidence>
<evidence type="ECO:0000269" key="25">
    <source>
    </source>
</evidence>
<evidence type="ECO:0000269" key="26">
    <source>
    </source>
</evidence>
<evidence type="ECO:0000303" key="27">
    <source>
    </source>
</evidence>
<evidence type="ECO:0000303" key="28">
    <source>
    </source>
</evidence>
<evidence type="ECO:0000303" key="29">
    <source>
    </source>
</evidence>
<evidence type="ECO:0000303" key="30">
    <source>
    </source>
</evidence>
<evidence type="ECO:0000305" key="31"/>
<evidence type="ECO:0000312" key="32">
    <source>
        <dbReference type="MGI" id="MGI:107931"/>
    </source>
</evidence>
<evidence type="ECO:0000312" key="33">
    <source>
        <dbReference type="Proteomes" id="UP000000589"/>
    </source>
</evidence>
<evidence type="ECO:0007744" key="34">
    <source>
        <dbReference type="PDB" id="3ADE"/>
    </source>
</evidence>
<evidence type="ECO:0007744" key="35">
    <source>
        <dbReference type="PDB" id="3WDZ"/>
    </source>
</evidence>
<evidence type="ECO:0007744" key="36">
    <source>
    </source>
</evidence>
<evidence type="ECO:0007744" key="37">
    <source>
    </source>
</evidence>
<evidence type="ECO:0007744" key="38">
    <source>
    </source>
</evidence>
<evidence type="ECO:0007829" key="39">
    <source>
        <dbReference type="PDB" id="3B0F"/>
    </source>
</evidence>
<evidence type="ECO:0007829" key="40">
    <source>
        <dbReference type="PDB" id="3WDZ"/>
    </source>
</evidence>
<keyword id="KW-0002">3D-structure</keyword>
<keyword id="KW-0007">Acetylation</keyword>
<keyword id="KW-0025">Alternative splicing</keyword>
<keyword id="KW-0053">Apoptosis</keyword>
<keyword id="KW-0072">Autophagy</keyword>
<keyword id="KW-0963">Cytoplasm</keyword>
<keyword id="KW-0968">Cytoplasmic vesicle</keyword>
<keyword id="KW-0221">Differentiation</keyword>
<keyword id="KW-0256">Endoplasmic reticulum</keyword>
<keyword id="KW-0967">Endosome</keyword>
<keyword id="KW-0391">Immunity</keyword>
<keyword id="KW-1017">Isopeptide bond</keyword>
<keyword id="KW-0449">Lipoprotein</keyword>
<keyword id="KW-0458">Lysosome</keyword>
<keyword id="KW-0479">Metal-binding</keyword>
<keyword id="KW-0539">Nucleus</keyword>
<keyword id="KW-0564">Palmitate</keyword>
<keyword id="KW-0597">Phosphoprotein</keyword>
<keyword id="KW-1185">Reference proteome</keyword>
<keyword id="KW-0832">Ubl conjugation</keyword>
<keyword id="KW-0862">Zinc</keyword>
<keyword id="KW-0863">Zinc-finger</keyword>
<feature type="initiator methionine" description="Removed" evidence="2">
    <location>
        <position position="1"/>
    </location>
</feature>
<feature type="chain" id="PRO_0000072177" description="Sequestosome-1">
    <location>
        <begin position="2"/>
        <end position="442"/>
    </location>
</feature>
<feature type="domain" description="PB1" evidence="5">
    <location>
        <begin position="3"/>
        <end position="102"/>
    </location>
</feature>
<feature type="domain" description="UBA" evidence="3">
    <location>
        <begin position="391"/>
        <end position="436"/>
    </location>
</feature>
<feature type="zinc finger region" description="ZZ-type" evidence="4">
    <location>
        <begin position="123"/>
        <end position="173"/>
    </location>
</feature>
<feature type="region of interest" description="Interaction with LCK" evidence="2">
    <location>
        <begin position="2"/>
        <end position="50"/>
    </location>
</feature>
<feature type="region of interest" description="Interaction with PRKCZ and dimerization" evidence="1">
    <location>
        <begin position="43"/>
        <end position="107"/>
    </location>
</feature>
<feature type="region of interest" description="Interaction with PAWR" evidence="2">
    <location>
        <begin position="50"/>
        <end position="80"/>
    </location>
</feature>
<feature type="region of interest" description="Interaction with GABRR3" evidence="1">
    <location>
        <begin position="122"/>
        <end position="224"/>
    </location>
</feature>
<feature type="region of interest" description="LIM protein-binding" evidence="2">
    <location>
        <begin position="170"/>
        <end position="220"/>
    </location>
</feature>
<feature type="region of interest" description="Disordered" evidence="6">
    <location>
        <begin position="204"/>
        <end position="234"/>
    </location>
</feature>
<feature type="region of interest" description="Disordered" evidence="6">
    <location>
        <begin position="262"/>
        <end position="308"/>
    </location>
</feature>
<feature type="region of interest" description="Interaction with NTRK1" evidence="1">
    <location>
        <begin position="269"/>
        <end position="442"/>
    </location>
</feature>
<feature type="region of interest" description="Disordered" evidence="6">
    <location>
        <begin position="321"/>
        <end position="386"/>
    </location>
</feature>
<feature type="region of interest" description="MAP1LC3B-binding" evidence="2">
    <location>
        <begin position="323"/>
        <end position="344"/>
    </location>
</feature>
<feature type="region of interest" description="Interaction with KEAP1" evidence="15 16">
    <location>
        <begin position="349"/>
        <end position="354"/>
    </location>
</feature>
<feature type="short sequence motif" description="TRAF6-binding" evidence="2">
    <location>
        <begin position="228"/>
        <end position="233"/>
    </location>
</feature>
<feature type="short sequence motif" description="LIR" evidence="23">
    <location>
        <begin position="338"/>
        <end position="343"/>
    </location>
</feature>
<feature type="compositionally biased region" description="Low complexity" evidence="6">
    <location>
        <begin position="269"/>
        <end position="279"/>
    </location>
</feature>
<feature type="compositionally biased region" description="Polar residues" evidence="6">
    <location>
        <begin position="285"/>
        <end position="295"/>
    </location>
</feature>
<feature type="compositionally biased region" description="Basic and acidic residues" evidence="6">
    <location>
        <begin position="339"/>
        <end position="349"/>
    </location>
</feature>
<feature type="compositionally biased region" description="Polar residues" evidence="6">
    <location>
        <begin position="353"/>
        <end position="375"/>
    </location>
</feature>
<feature type="binding site" evidence="4">
    <location>
        <position position="128"/>
    </location>
    <ligand>
        <name>Zn(2+)</name>
        <dbReference type="ChEBI" id="CHEBI:29105"/>
        <label>1</label>
    </ligand>
</feature>
<feature type="binding site" evidence="4">
    <location>
        <position position="131"/>
    </location>
    <ligand>
        <name>Zn(2+)</name>
        <dbReference type="ChEBI" id="CHEBI:29105"/>
        <label>1</label>
    </ligand>
</feature>
<feature type="binding site" evidence="4">
    <location>
        <position position="142"/>
    </location>
    <ligand>
        <name>Zn(2+)</name>
        <dbReference type="ChEBI" id="CHEBI:29105"/>
        <label>2</label>
    </ligand>
</feature>
<feature type="binding site" evidence="4">
    <location>
        <position position="145"/>
    </location>
    <ligand>
        <name>Zn(2+)</name>
        <dbReference type="ChEBI" id="CHEBI:29105"/>
        <label>2</label>
    </ligand>
</feature>
<feature type="binding site" evidence="4">
    <location>
        <position position="151"/>
    </location>
    <ligand>
        <name>Zn(2+)</name>
        <dbReference type="ChEBI" id="CHEBI:29105"/>
        <label>1</label>
    </ligand>
</feature>
<feature type="binding site" evidence="4">
    <location>
        <position position="154"/>
    </location>
    <ligand>
        <name>Zn(2+)</name>
        <dbReference type="ChEBI" id="CHEBI:29105"/>
        <label>1</label>
    </ligand>
</feature>
<feature type="binding site" evidence="4">
    <location>
        <position position="160"/>
    </location>
    <ligand>
        <name>Zn(2+)</name>
        <dbReference type="ChEBI" id="CHEBI:29105"/>
        <label>2</label>
    </ligand>
</feature>
<feature type="binding site" evidence="4">
    <location>
        <position position="163"/>
    </location>
    <ligand>
        <name>Zn(2+)</name>
        <dbReference type="ChEBI" id="CHEBI:29105"/>
        <label>2</label>
    </ligand>
</feature>
<feature type="modified residue" description="N-acetylalanine" evidence="2">
    <location>
        <position position="2"/>
    </location>
</feature>
<feature type="modified residue" description="Phosphoserine" evidence="38">
    <location>
        <position position="24"/>
    </location>
</feature>
<feature type="modified residue" description="Phosphotyrosine" evidence="2">
    <location>
        <position position="148"/>
    </location>
</feature>
<feature type="modified residue" description="Phosphoserine" evidence="2">
    <location>
        <position position="176"/>
    </location>
</feature>
<feature type="modified residue" description="Phosphoserine" evidence="36">
    <location>
        <position position="178"/>
    </location>
</feature>
<feature type="modified residue" description="Phosphoserine" evidence="2">
    <location>
        <position position="207"/>
    </location>
</feature>
<feature type="modified residue" description="Phosphoserine" evidence="2">
    <location>
        <position position="249"/>
    </location>
</feature>
<feature type="modified residue" description="Phosphoserine" evidence="2">
    <location>
        <position position="266"/>
    </location>
</feature>
<feature type="modified residue" description="Phosphothreonine" evidence="36 38">
    <location>
        <position position="269"/>
    </location>
</feature>
<feature type="modified residue" description="Phosphothreonine" evidence="36 38">
    <location>
        <position position="272"/>
    </location>
</feature>
<feature type="modified residue" description="Phosphoserine" evidence="2">
    <location>
        <position position="284"/>
    </location>
</feature>
<feature type="modified residue" description="Phosphoserine" evidence="2">
    <location>
        <position position="308"/>
    </location>
</feature>
<feature type="modified residue" description="Phosphoserine" evidence="38">
    <location>
        <position position="330"/>
    </location>
</feature>
<feature type="modified residue" description="Phosphoserine" evidence="37 38">
    <location>
        <position position="334"/>
    </location>
</feature>
<feature type="modified residue" description="Phosphoserine; by ULK1" evidence="20 24">
    <location>
        <position position="351"/>
    </location>
</feature>
<feature type="modified residue" description="Phosphoserine" evidence="2">
    <location>
        <position position="357"/>
    </location>
</feature>
<feature type="modified residue" description="Phosphoserine" evidence="38">
    <location>
        <position position="363"/>
    </location>
</feature>
<feature type="modified residue" description="Phosphoserine" evidence="38">
    <location>
        <position position="367"/>
    </location>
</feature>
<feature type="modified residue" description="Phosphoserine" evidence="2">
    <location>
        <position position="368"/>
    </location>
</feature>
<feature type="modified residue" description="Phosphoserine; by ULK1 and TBK1" evidence="22">
    <location>
        <position position="405"/>
    </location>
</feature>
<feature type="modified residue" description="Phosphoserine; by ULK1" evidence="22">
    <location>
        <position position="409"/>
    </location>
</feature>
<feature type="modified residue" description="N6-acetyllysine; alternate" evidence="2">
    <location>
        <position position="422"/>
    </location>
</feature>
<feature type="modified residue" description="N6-acetyllysine; alternate" evidence="2">
    <location>
        <position position="437"/>
    </location>
</feature>
<feature type="lipid moiety-binding region" description="S-palmitoyl cysteine" evidence="2">
    <location>
        <position position="291"/>
    </location>
</feature>
<feature type="cross-link" description="Glycyl lysine isopeptide (Lys-Gly) (interchain with G-Cter in ubiquitin); alternate" evidence="2">
    <location>
        <position position="422"/>
    </location>
</feature>
<feature type="cross-link" description="Glycyl lysine isopeptide (Lys-Gly) (interchain with G-Cter in SUMO2); alternate" evidence="2">
    <location>
        <position position="437"/>
    </location>
</feature>
<feature type="splice variant" id="VSP_015842" description="In isoform 2." evidence="28 29">
    <location>
        <begin position="353"/>
        <end position="390"/>
    </location>
</feature>
<feature type="mutagenesis site" description="Abolished oligomerization without affecting interaction with KEAP1; when associated with A-69." evidence="15 23">
    <original>K</original>
    <variation>A</variation>
    <location>
        <position position="7"/>
    </location>
</feature>
<feature type="mutagenesis site" description="Abolished oligomerization without affecting interaction with KEAP1; when associated with A-7." evidence="15 23">
    <original>D</original>
    <variation>A</variation>
    <location>
        <position position="69"/>
    </location>
</feature>
<feature type="mutagenesis site" description="Greatly decreases interaction with MAP1LC3B." evidence="14">
    <original>DDD</original>
    <variation>AAA</variation>
    <location>
        <begin position="337"/>
        <end position="339"/>
    </location>
</feature>
<feature type="mutagenesis site" description="Abolished interaction with ATG8 family proteins." evidence="23">
    <original>WTHL</original>
    <variation>ATHA</variation>
    <location>
        <begin position="340"/>
        <end position="343"/>
    </location>
</feature>
<feature type="mutagenesis site" description="Greatly decreases interaction with MAP1LC3B." evidence="14">
    <original>W</original>
    <variation>A</variation>
    <location>
        <position position="340"/>
    </location>
</feature>
<feature type="mutagenesis site" description="Greatly decreases interaction with MAP1LC3B." evidence="14">
    <original>L</original>
    <variation>A</variation>
    <location>
        <position position="343"/>
    </location>
</feature>
<feature type="mutagenesis site" description="Abolishes interaction with KEAP1." evidence="16">
    <original>DPSTGE</original>
    <variation>AAAAAA</variation>
    <location>
        <begin position="349"/>
        <end position="354"/>
    </location>
</feature>
<feature type="mutagenesis site" description="Strongly decreased interaction with KEAP1." evidence="15">
    <original>D</original>
    <variation>A</variation>
    <location>
        <position position="349"/>
    </location>
</feature>
<feature type="mutagenesis site" description="Strongly decreased interaction with KEAP1." evidence="15">
    <original>P</original>
    <variation>A</variation>
    <location>
        <position position="350"/>
    </location>
</feature>
<feature type="mutagenesis site" description="Does not affect interaction with KEAP1. Decreased phosphorylation by ULK1." evidence="15 20">
    <original>S</original>
    <variation>A</variation>
    <location>
        <position position="351"/>
    </location>
</feature>
<feature type="mutagenesis site" description="Mimics phosphorylation; promotes interaction with KEAP1 and nuclear accumulation of NFE2L2/NRF2." evidence="20 24">
    <original>S</original>
    <variation>E</variation>
    <location>
        <position position="351"/>
    </location>
</feature>
<feature type="mutagenesis site" description="Strongly decreased interaction with KEAP1." evidence="15 23">
    <original>T</original>
    <variation>A</variation>
    <location>
        <position position="352"/>
    </location>
</feature>
<feature type="mutagenesis site" description="Strongly decreased interaction with KEAP1." evidence="15">
    <original>G</original>
    <variation>A</variation>
    <location>
        <position position="353"/>
    </location>
</feature>
<feature type="mutagenesis site" description="Strongly decreased interaction with KEAP1." evidence="15">
    <original>E</original>
    <variation>A</variation>
    <location>
        <position position="354"/>
    </location>
</feature>
<feature type="mutagenesis site" description="Decreased but not abolished phosphorylation by ULK1." evidence="22">
    <original>S</original>
    <variation>A</variation>
    <location>
        <position position="409"/>
    </location>
</feature>
<feature type="mutagenesis site" description="Mimics phosphorylation; increased affinity for ubiquitinated proteins, promoting autophagic degradation." evidence="22">
    <original>S</original>
    <variation>E</variation>
    <location>
        <position position="409"/>
    </location>
</feature>
<feature type="turn" evidence="40">
    <location>
        <begin position="350"/>
        <end position="352"/>
    </location>
</feature>
<feature type="helix" evidence="39">
    <location>
        <begin position="394"/>
        <end position="405"/>
    </location>
</feature>
<feature type="helix" evidence="39">
    <location>
        <begin position="411"/>
        <end position="413"/>
    </location>
</feature>
<feature type="helix" evidence="39">
    <location>
        <begin position="414"/>
        <end position="421"/>
    </location>
</feature>
<feature type="turn" evidence="39">
    <location>
        <begin position="422"/>
        <end position="424"/>
    </location>
</feature>
<feature type="helix" evidence="39">
    <location>
        <begin position="426"/>
        <end position="432"/>
    </location>
</feature>